<dbReference type="EC" id="2.4.2.9" evidence="1"/>
<dbReference type="EMBL" id="AE016958">
    <property type="protein sequence ID" value="AAS05981.1"/>
    <property type="molecule type" value="Genomic_DNA"/>
</dbReference>
<dbReference type="SMR" id="Q73UD7"/>
<dbReference type="STRING" id="262316.MAP_3431c"/>
<dbReference type="KEGG" id="mpa:MAP_3431c"/>
<dbReference type="eggNOG" id="COG0035">
    <property type="taxonomic scope" value="Bacteria"/>
</dbReference>
<dbReference type="HOGENOM" id="CLU_067096_2_3_11"/>
<dbReference type="UniPathway" id="UPA00574">
    <property type="reaction ID" value="UER00636"/>
</dbReference>
<dbReference type="Proteomes" id="UP000000580">
    <property type="component" value="Chromosome"/>
</dbReference>
<dbReference type="GO" id="GO:0005525">
    <property type="term" value="F:GTP binding"/>
    <property type="evidence" value="ECO:0007669"/>
    <property type="project" value="UniProtKB-KW"/>
</dbReference>
<dbReference type="GO" id="GO:0000287">
    <property type="term" value="F:magnesium ion binding"/>
    <property type="evidence" value="ECO:0007669"/>
    <property type="project" value="UniProtKB-UniRule"/>
</dbReference>
<dbReference type="GO" id="GO:0004845">
    <property type="term" value="F:uracil phosphoribosyltransferase activity"/>
    <property type="evidence" value="ECO:0007669"/>
    <property type="project" value="UniProtKB-UniRule"/>
</dbReference>
<dbReference type="GO" id="GO:0044206">
    <property type="term" value="P:UMP salvage"/>
    <property type="evidence" value="ECO:0007669"/>
    <property type="project" value="UniProtKB-UniRule"/>
</dbReference>
<dbReference type="GO" id="GO:0006223">
    <property type="term" value="P:uracil salvage"/>
    <property type="evidence" value="ECO:0007669"/>
    <property type="project" value="InterPro"/>
</dbReference>
<dbReference type="CDD" id="cd06223">
    <property type="entry name" value="PRTases_typeI"/>
    <property type="match status" value="1"/>
</dbReference>
<dbReference type="FunFam" id="3.40.50.2020:FF:000003">
    <property type="entry name" value="Uracil phosphoribosyltransferase"/>
    <property type="match status" value="1"/>
</dbReference>
<dbReference type="Gene3D" id="3.40.50.2020">
    <property type="match status" value="1"/>
</dbReference>
<dbReference type="HAMAP" id="MF_01218_B">
    <property type="entry name" value="Upp_B"/>
    <property type="match status" value="1"/>
</dbReference>
<dbReference type="InterPro" id="IPR000836">
    <property type="entry name" value="PRibTrfase_dom"/>
</dbReference>
<dbReference type="InterPro" id="IPR029057">
    <property type="entry name" value="PRTase-like"/>
</dbReference>
<dbReference type="InterPro" id="IPR034332">
    <property type="entry name" value="Upp_B"/>
</dbReference>
<dbReference type="InterPro" id="IPR050054">
    <property type="entry name" value="UPRTase/APRTase"/>
</dbReference>
<dbReference type="InterPro" id="IPR005765">
    <property type="entry name" value="Ura_phspho_trans"/>
</dbReference>
<dbReference type="NCBIfam" id="NF001097">
    <property type="entry name" value="PRK00129.1"/>
    <property type="match status" value="1"/>
</dbReference>
<dbReference type="NCBIfam" id="TIGR01091">
    <property type="entry name" value="upp"/>
    <property type="match status" value="1"/>
</dbReference>
<dbReference type="PANTHER" id="PTHR32315">
    <property type="entry name" value="ADENINE PHOSPHORIBOSYLTRANSFERASE"/>
    <property type="match status" value="1"/>
</dbReference>
<dbReference type="PANTHER" id="PTHR32315:SF4">
    <property type="entry name" value="URACIL PHOSPHORIBOSYLTRANSFERASE, CHLOROPLASTIC"/>
    <property type="match status" value="1"/>
</dbReference>
<dbReference type="Pfam" id="PF14681">
    <property type="entry name" value="UPRTase"/>
    <property type="match status" value="1"/>
</dbReference>
<dbReference type="SUPFAM" id="SSF53271">
    <property type="entry name" value="PRTase-like"/>
    <property type="match status" value="1"/>
</dbReference>
<protein>
    <recommendedName>
        <fullName evidence="1">Uracil phosphoribosyltransferase</fullName>
        <ecNumber evidence="1">2.4.2.9</ecNumber>
    </recommendedName>
    <alternativeName>
        <fullName evidence="1">UMP pyrophosphorylase</fullName>
    </alternativeName>
    <alternativeName>
        <fullName evidence="1">UPRTase</fullName>
    </alternativeName>
</protein>
<proteinExistence type="inferred from homology"/>
<evidence type="ECO:0000255" key="1">
    <source>
        <dbReference type="HAMAP-Rule" id="MF_01218"/>
    </source>
</evidence>
<evidence type="ECO:0000256" key="2">
    <source>
        <dbReference type="SAM" id="MobiDB-lite"/>
    </source>
</evidence>
<comment type="function">
    <text evidence="1">Catalyzes the conversion of uracil and 5-phospho-alpha-D-ribose 1-diphosphate (PRPP) to UMP and diphosphate.</text>
</comment>
<comment type="catalytic activity">
    <reaction evidence="1">
        <text>UMP + diphosphate = 5-phospho-alpha-D-ribose 1-diphosphate + uracil</text>
        <dbReference type="Rhea" id="RHEA:13017"/>
        <dbReference type="ChEBI" id="CHEBI:17568"/>
        <dbReference type="ChEBI" id="CHEBI:33019"/>
        <dbReference type="ChEBI" id="CHEBI:57865"/>
        <dbReference type="ChEBI" id="CHEBI:58017"/>
        <dbReference type="EC" id="2.4.2.9"/>
    </reaction>
</comment>
<comment type="cofactor">
    <cofactor evidence="1">
        <name>Mg(2+)</name>
        <dbReference type="ChEBI" id="CHEBI:18420"/>
    </cofactor>
    <text evidence="1">Binds 1 Mg(2+) ion per subunit. The magnesium is bound as Mg-PRPP.</text>
</comment>
<comment type="activity regulation">
    <text evidence="1">Allosterically activated by GTP.</text>
</comment>
<comment type="pathway">
    <text evidence="1">Pyrimidine metabolism; UMP biosynthesis via salvage pathway; UMP from uracil: step 1/1.</text>
</comment>
<comment type="similarity">
    <text evidence="1">Belongs to the UPRTase family.</text>
</comment>
<keyword id="KW-0021">Allosteric enzyme</keyword>
<keyword id="KW-0328">Glycosyltransferase</keyword>
<keyword id="KW-0342">GTP-binding</keyword>
<keyword id="KW-0460">Magnesium</keyword>
<keyword id="KW-0547">Nucleotide-binding</keyword>
<keyword id="KW-1185">Reference proteome</keyword>
<keyword id="KW-0808">Transferase</keyword>
<sequence>MDVCVIDHPLAAARLTVLRDERTDTAGFRAALRDLTLMLVYEASRDAPRKSVRIRTPVAAAAGTRLVNPPLLVPVLRAGLGMVDPAQAALPEAEVGFVGVARDEQTHRPVPYLAALPDKLAGRPVMVLDPMLATGGSMAHTLGLLQRRGATDITVLCVVAAPEGLAAVGETAPDARVFTAAVDKGLNKAAYIVPGLGDAGDRQFGPNLFTSSAPSRPEAPAGRGRAAAKTPGRRSARSESPSSTSPSARSRKAAPPA</sequence>
<reference key="1">
    <citation type="journal article" date="2005" name="Proc. Natl. Acad. Sci. U.S.A.">
        <title>The complete genome sequence of Mycobacterium avium subspecies paratuberculosis.</title>
        <authorList>
            <person name="Li L."/>
            <person name="Bannantine J.P."/>
            <person name="Zhang Q."/>
            <person name="Amonsin A."/>
            <person name="May B.J."/>
            <person name="Alt D."/>
            <person name="Banerji N."/>
            <person name="Kanjilal S."/>
            <person name="Kapur V."/>
        </authorList>
    </citation>
    <scope>NUCLEOTIDE SEQUENCE [LARGE SCALE GENOMIC DNA]</scope>
    <source>
        <strain>ATCC BAA-968 / K-10</strain>
    </source>
</reference>
<gene>
    <name evidence="1" type="primary">upp</name>
    <name type="ordered locus">MAP_3431c</name>
</gene>
<name>UPP_MYCPA</name>
<feature type="chain" id="PRO_0000120854" description="Uracil phosphoribosyltransferase">
    <location>
        <begin position="1"/>
        <end position="257"/>
    </location>
</feature>
<feature type="region of interest" description="Disordered" evidence="2">
    <location>
        <begin position="203"/>
        <end position="257"/>
    </location>
</feature>
<feature type="compositionally biased region" description="Low complexity" evidence="2">
    <location>
        <begin position="211"/>
        <end position="230"/>
    </location>
</feature>
<feature type="compositionally biased region" description="Low complexity" evidence="2">
    <location>
        <begin position="238"/>
        <end position="248"/>
    </location>
</feature>
<feature type="binding site" evidence="1">
    <location>
        <position position="77"/>
    </location>
    <ligand>
        <name>5-phospho-alpha-D-ribose 1-diphosphate</name>
        <dbReference type="ChEBI" id="CHEBI:58017"/>
    </ligand>
</feature>
<feature type="binding site" evidence="1">
    <location>
        <position position="102"/>
    </location>
    <ligand>
        <name>5-phospho-alpha-D-ribose 1-diphosphate</name>
        <dbReference type="ChEBI" id="CHEBI:58017"/>
    </ligand>
</feature>
<feature type="binding site" evidence="1">
    <location>
        <begin position="129"/>
        <end position="137"/>
    </location>
    <ligand>
        <name>5-phospho-alpha-D-ribose 1-diphosphate</name>
        <dbReference type="ChEBI" id="CHEBI:58017"/>
    </ligand>
</feature>
<feature type="binding site" evidence="1">
    <location>
        <position position="192"/>
    </location>
    <ligand>
        <name>uracil</name>
        <dbReference type="ChEBI" id="CHEBI:17568"/>
    </ligand>
</feature>
<feature type="binding site" evidence="1">
    <location>
        <begin position="197"/>
        <end position="199"/>
    </location>
    <ligand>
        <name>uracil</name>
        <dbReference type="ChEBI" id="CHEBI:17568"/>
    </ligand>
</feature>
<feature type="binding site" evidence="1">
    <location>
        <position position="198"/>
    </location>
    <ligand>
        <name>5-phospho-alpha-D-ribose 1-diphosphate</name>
        <dbReference type="ChEBI" id="CHEBI:58017"/>
    </ligand>
</feature>
<accession>Q73UD7</accession>
<organism>
    <name type="scientific">Mycolicibacterium paratuberculosis (strain ATCC BAA-968 / K-10)</name>
    <name type="common">Mycobacterium paratuberculosis</name>
    <dbReference type="NCBI Taxonomy" id="262316"/>
    <lineage>
        <taxon>Bacteria</taxon>
        <taxon>Bacillati</taxon>
        <taxon>Actinomycetota</taxon>
        <taxon>Actinomycetes</taxon>
        <taxon>Mycobacteriales</taxon>
        <taxon>Mycobacteriaceae</taxon>
        <taxon>Mycobacterium</taxon>
        <taxon>Mycobacterium avium complex (MAC)</taxon>
    </lineage>
</organism>